<dbReference type="EC" id="2.8.1.13" evidence="1"/>
<dbReference type="EMBL" id="AL590842">
    <property type="protein sequence ID" value="CAL20283.1"/>
    <property type="molecule type" value="Genomic_DNA"/>
</dbReference>
<dbReference type="EMBL" id="AE009952">
    <property type="protein sequence ID" value="AAM85367.1"/>
    <property type="molecule type" value="Genomic_DNA"/>
</dbReference>
<dbReference type="EMBL" id="AE017042">
    <property type="protein sequence ID" value="AAS61995.1"/>
    <property type="molecule type" value="Genomic_DNA"/>
</dbReference>
<dbReference type="PIR" id="AI0199">
    <property type="entry name" value="AI0199"/>
</dbReference>
<dbReference type="RefSeq" id="WP_002210913.1">
    <property type="nucleotide sequence ID" value="NZ_WUCL01000021.1"/>
</dbReference>
<dbReference type="RefSeq" id="YP_002346649.1">
    <property type="nucleotide sequence ID" value="NC_003143.1"/>
</dbReference>
<dbReference type="SMR" id="Q8ZFQ5"/>
<dbReference type="STRING" id="214092.YPO1638"/>
<dbReference type="PaxDb" id="214092-YPO1638"/>
<dbReference type="DNASU" id="1146746"/>
<dbReference type="EnsemblBacteria" id="AAS61995">
    <property type="protein sequence ID" value="AAS61995"/>
    <property type="gene ID" value="YP_1768"/>
</dbReference>
<dbReference type="GeneID" id="57976935"/>
<dbReference type="KEGG" id="ype:YPO1638"/>
<dbReference type="KEGG" id="ypk:y1799"/>
<dbReference type="KEGG" id="ypm:YP_1768"/>
<dbReference type="PATRIC" id="fig|214092.21.peg.1983"/>
<dbReference type="eggNOG" id="COG0482">
    <property type="taxonomic scope" value="Bacteria"/>
</dbReference>
<dbReference type="HOGENOM" id="CLU_035188_1_0_6"/>
<dbReference type="OMA" id="PFYVWDL"/>
<dbReference type="OrthoDB" id="9800696at2"/>
<dbReference type="Proteomes" id="UP000000815">
    <property type="component" value="Chromosome"/>
</dbReference>
<dbReference type="Proteomes" id="UP000001019">
    <property type="component" value="Chromosome"/>
</dbReference>
<dbReference type="Proteomes" id="UP000002490">
    <property type="component" value="Chromosome"/>
</dbReference>
<dbReference type="GO" id="GO:0005737">
    <property type="term" value="C:cytoplasm"/>
    <property type="evidence" value="ECO:0007669"/>
    <property type="project" value="UniProtKB-SubCell"/>
</dbReference>
<dbReference type="GO" id="GO:0005524">
    <property type="term" value="F:ATP binding"/>
    <property type="evidence" value="ECO:0007669"/>
    <property type="project" value="UniProtKB-KW"/>
</dbReference>
<dbReference type="GO" id="GO:0000049">
    <property type="term" value="F:tRNA binding"/>
    <property type="evidence" value="ECO:0007669"/>
    <property type="project" value="UniProtKB-KW"/>
</dbReference>
<dbReference type="GO" id="GO:0103016">
    <property type="term" value="F:tRNA-uridine 2-sulfurtransferase activity"/>
    <property type="evidence" value="ECO:0007669"/>
    <property type="project" value="UniProtKB-EC"/>
</dbReference>
<dbReference type="GO" id="GO:0002143">
    <property type="term" value="P:tRNA wobble position uridine thiolation"/>
    <property type="evidence" value="ECO:0000318"/>
    <property type="project" value="GO_Central"/>
</dbReference>
<dbReference type="CDD" id="cd01998">
    <property type="entry name" value="MnmA_TRMU-like"/>
    <property type="match status" value="1"/>
</dbReference>
<dbReference type="FunFam" id="2.30.30.280:FF:000001">
    <property type="entry name" value="tRNA-specific 2-thiouridylase MnmA"/>
    <property type="match status" value="1"/>
</dbReference>
<dbReference type="FunFam" id="2.40.30.10:FF:000023">
    <property type="entry name" value="tRNA-specific 2-thiouridylase MnmA"/>
    <property type="match status" value="1"/>
</dbReference>
<dbReference type="FunFam" id="3.40.50.620:FF:000004">
    <property type="entry name" value="tRNA-specific 2-thiouridylase MnmA"/>
    <property type="match status" value="1"/>
</dbReference>
<dbReference type="Gene3D" id="2.30.30.280">
    <property type="entry name" value="Adenine nucleotide alpha hydrolases-like domains"/>
    <property type="match status" value="1"/>
</dbReference>
<dbReference type="Gene3D" id="3.40.50.620">
    <property type="entry name" value="HUPs"/>
    <property type="match status" value="1"/>
</dbReference>
<dbReference type="Gene3D" id="2.40.30.10">
    <property type="entry name" value="Translation factors"/>
    <property type="match status" value="1"/>
</dbReference>
<dbReference type="HAMAP" id="MF_00144">
    <property type="entry name" value="tRNA_thiouridyl_MnmA"/>
    <property type="match status" value="1"/>
</dbReference>
<dbReference type="InterPro" id="IPR004506">
    <property type="entry name" value="MnmA-like"/>
</dbReference>
<dbReference type="InterPro" id="IPR046885">
    <property type="entry name" value="MnmA-like_C"/>
</dbReference>
<dbReference type="InterPro" id="IPR046884">
    <property type="entry name" value="MnmA-like_central"/>
</dbReference>
<dbReference type="InterPro" id="IPR023382">
    <property type="entry name" value="MnmA-like_central_sf"/>
</dbReference>
<dbReference type="InterPro" id="IPR014729">
    <property type="entry name" value="Rossmann-like_a/b/a_fold"/>
</dbReference>
<dbReference type="NCBIfam" id="NF001138">
    <property type="entry name" value="PRK00143.1"/>
    <property type="match status" value="1"/>
</dbReference>
<dbReference type="NCBIfam" id="TIGR00420">
    <property type="entry name" value="trmU"/>
    <property type="match status" value="1"/>
</dbReference>
<dbReference type="PANTHER" id="PTHR11933:SF5">
    <property type="entry name" value="MITOCHONDRIAL TRNA-SPECIFIC 2-THIOURIDYLASE 1"/>
    <property type="match status" value="1"/>
</dbReference>
<dbReference type="PANTHER" id="PTHR11933">
    <property type="entry name" value="TRNA 5-METHYLAMINOMETHYL-2-THIOURIDYLATE -METHYLTRANSFERASE"/>
    <property type="match status" value="1"/>
</dbReference>
<dbReference type="Pfam" id="PF03054">
    <property type="entry name" value="tRNA_Me_trans"/>
    <property type="match status" value="1"/>
</dbReference>
<dbReference type="Pfam" id="PF20258">
    <property type="entry name" value="tRNA_Me_trans_C"/>
    <property type="match status" value="1"/>
</dbReference>
<dbReference type="Pfam" id="PF20259">
    <property type="entry name" value="tRNA_Me_trans_M"/>
    <property type="match status" value="1"/>
</dbReference>
<dbReference type="SUPFAM" id="SSF52402">
    <property type="entry name" value="Adenine nucleotide alpha hydrolases-like"/>
    <property type="match status" value="1"/>
</dbReference>
<evidence type="ECO:0000255" key="1">
    <source>
        <dbReference type="HAMAP-Rule" id="MF_00144"/>
    </source>
</evidence>
<protein>
    <recommendedName>
        <fullName evidence="1">tRNA-specific 2-thiouridylase MnmA</fullName>
        <ecNumber evidence="1">2.8.1.13</ecNumber>
    </recommendedName>
</protein>
<accession>Q8ZFQ5</accession>
<accession>Q0WGD9</accession>
<keyword id="KW-0067">ATP-binding</keyword>
<keyword id="KW-0963">Cytoplasm</keyword>
<keyword id="KW-1015">Disulfide bond</keyword>
<keyword id="KW-0547">Nucleotide-binding</keyword>
<keyword id="KW-1185">Reference proteome</keyword>
<keyword id="KW-0694">RNA-binding</keyword>
<keyword id="KW-0808">Transferase</keyword>
<keyword id="KW-0819">tRNA processing</keyword>
<keyword id="KW-0820">tRNA-binding</keyword>
<proteinExistence type="inferred from homology"/>
<feature type="chain" id="PRO_0000121596" description="tRNA-specific 2-thiouridylase MnmA">
    <location>
        <begin position="1"/>
        <end position="371"/>
    </location>
</feature>
<feature type="region of interest" description="Interaction with target base in tRNA" evidence="1">
    <location>
        <begin position="98"/>
        <end position="100"/>
    </location>
</feature>
<feature type="region of interest" description="Interaction with tRNA" evidence="1">
    <location>
        <begin position="150"/>
        <end position="152"/>
    </location>
</feature>
<feature type="region of interest" description="Interaction with tRNA" evidence="1">
    <location>
        <begin position="312"/>
        <end position="313"/>
    </location>
</feature>
<feature type="active site" description="Nucleophile" evidence="1">
    <location>
        <position position="103"/>
    </location>
</feature>
<feature type="active site" description="Cysteine persulfide intermediate" evidence="1">
    <location>
        <position position="200"/>
    </location>
</feature>
<feature type="binding site" evidence="1">
    <location>
        <begin position="12"/>
        <end position="19"/>
    </location>
    <ligand>
        <name>ATP</name>
        <dbReference type="ChEBI" id="CHEBI:30616"/>
    </ligand>
</feature>
<feature type="binding site" evidence="1">
    <location>
        <position position="38"/>
    </location>
    <ligand>
        <name>ATP</name>
        <dbReference type="ChEBI" id="CHEBI:30616"/>
    </ligand>
</feature>
<feature type="binding site" evidence="1">
    <location>
        <position position="128"/>
    </location>
    <ligand>
        <name>ATP</name>
        <dbReference type="ChEBI" id="CHEBI:30616"/>
    </ligand>
</feature>
<feature type="site" description="Interaction with tRNA" evidence="1">
    <location>
        <position position="129"/>
    </location>
</feature>
<feature type="site" description="Interaction with tRNA" evidence="1">
    <location>
        <position position="345"/>
    </location>
</feature>
<feature type="disulfide bond" description="Alternate" evidence="1">
    <location>
        <begin position="103"/>
        <end position="200"/>
    </location>
</feature>
<gene>
    <name evidence="1" type="primary">mnmA</name>
    <name type="synonym">trmU</name>
    <name type="ordered locus">YPO1638</name>
    <name type="ordered locus">y1799</name>
    <name type="ordered locus">YP_1768</name>
</gene>
<reference key="1">
    <citation type="journal article" date="2001" name="Nature">
        <title>Genome sequence of Yersinia pestis, the causative agent of plague.</title>
        <authorList>
            <person name="Parkhill J."/>
            <person name="Wren B.W."/>
            <person name="Thomson N.R."/>
            <person name="Titball R.W."/>
            <person name="Holden M.T.G."/>
            <person name="Prentice M.B."/>
            <person name="Sebaihia M."/>
            <person name="James K.D."/>
            <person name="Churcher C.M."/>
            <person name="Mungall K.L."/>
            <person name="Baker S."/>
            <person name="Basham D."/>
            <person name="Bentley S.D."/>
            <person name="Brooks K."/>
            <person name="Cerdeno-Tarraga A.-M."/>
            <person name="Chillingworth T."/>
            <person name="Cronin A."/>
            <person name="Davies R.M."/>
            <person name="Davis P."/>
            <person name="Dougan G."/>
            <person name="Feltwell T."/>
            <person name="Hamlin N."/>
            <person name="Holroyd S."/>
            <person name="Jagels K."/>
            <person name="Karlyshev A.V."/>
            <person name="Leather S."/>
            <person name="Moule S."/>
            <person name="Oyston P.C.F."/>
            <person name="Quail M.A."/>
            <person name="Rutherford K.M."/>
            <person name="Simmonds M."/>
            <person name="Skelton J."/>
            <person name="Stevens K."/>
            <person name="Whitehead S."/>
            <person name="Barrell B.G."/>
        </authorList>
    </citation>
    <scope>NUCLEOTIDE SEQUENCE [LARGE SCALE GENOMIC DNA]</scope>
    <source>
        <strain>CO-92 / Biovar Orientalis</strain>
    </source>
</reference>
<reference key="2">
    <citation type="journal article" date="2002" name="J. Bacteriol.">
        <title>Genome sequence of Yersinia pestis KIM.</title>
        <authorList>
            <person name="Deng W."/>
            <person name="Burland V."/>
            <person name="Plunkett G. III"/>
            <person name="Boutin A."/>
            <person name="Mayhew G.F."/>
            <person name="Liss P."/>
            <person name="Perna N.T."/>
            <person name="Rose D.J."/>
            <person name="Mau B."/>
            <person name="Zhou S."/>
            <person name="Schwartz D.C."/>
            <person name="Fetherston J.D."/>
            <person name="Lindler L.E."/>
            <person name="Brubaker R.R."/>
            <person name="Plano G.V."/>
            <person name="Straley S.C."/>
            <person name="McDonough K.A."/>
            <person name="Nilles M.L."/>
            <person name="Matson J.S."/>
            <person name="Blattner F.R."/>
            <person name="Perry R.D."/>
        </authorList>
    </citation>
    <scope>NUCLEOTIDE SEQUENCE [LARGE SCALE GENOMIC DNA]</scope>
    <source>
        <strain>KIM10+ / Biovar Mediaevalis</strain>
    </source>
</reference>
<reference key="3">
    <citation type="journal article" date="2004" name="DNA Res.">
        <title>Complete genome sequence of Yersinia pestis strain 91001, an isolate avirulent to humans.</title>
        <authorList>
            <person name="Song Y."/>
            <person name="Tong Z."/>
            <person name="Wang J."/>
            <person name="Wang L."/>
            <person name="Guo Z."/>
            <person name="Han Y."/>
            <person name="Zhang J."/>
            <person name="Pei D."/>
            <person name="Zhou D."/>
            <person name="Qin H."/>
            <person name="Pang X."/>
            <person name="Han Y."/>
            <person name="Zhai J."/>
            <person name="Li M."/>
            <person name="Cui B."/>
            <person name="Qi Z."/>
            <person name="Jin L."/>
            <person name="Dai R."/>
            <person name="Chen F."/>
            <person name="Li S."/>
            <person name="Ye C."/>
            <person name="Du Z."/>
            <person name="Lin W."/>
            <person name="Wang J."/>
            <person name="Yu J."/>
            <person name="Yang H."/>
            <person name="Wang J."/>
            <person name="Huang P."/>
            <person name="Yang R."/>
        </authorList>
    </citation>
    <scope>NUCLEOTIDE SEQUENCE [LARGE SCALE GENOMIC DNA]</scope>
    <source>
        <strain>91001 / Biovar Mediaevalis</strain>
    </source>
</reference>
<name>MNMA_YERPE</name>
<organism>
    <name type="scientific">Yersinia pestis</name>
    <dbReference type="NCBI Taxonomy" id="632"/>
    <lineage>
        <taxon>Bacteria</taxon>
        <taxon>Pseudomonadati</taxon>
        <taxon>Pseudomonadota</taxon>
        <taxon>Gammaproteobacteria</taxon>
        <taxon>Enterobacterales</taxon>
        <taxon>Yersiniaceae</taxon>
        <taxon>Yersinia</taxon>
    </lineage>
</organism>
<comment type="function">
    <text evidence="1">Catalyzes the 2-thiolation of uridine at the wobble position (U34) of tRNA(Lys), tRNA(Glu) and tRNA(Gln), leading to the formation of s(2)U34, the first step of tRNA-mnm(5)s(2)U34 synthesis. Sulfur is provided by IscS, via a sulfur-relay system. Binds ATP and its substrate tRNAs.</text>
</comment>
<comment type="catalytic activity">
    <reaction evidence="1">
        <text>S-sulfanyl-L-cysteinyl-[protein] + uridine(34) in tRNA + AH2 + ATP = 2-thiouridine(34) in tRNA + L-cysteinyl-[protein] + A + AMP + diphosphate + H(+)</text>
        <dbReference type="Rhea" id="RHEA:47032"/>
        <dbReference type="Rhea" id="RHEA-COMP:10131"/>
        <dbReference type="Rhea" id="RHEA-COMP:11726"/>
        <dbReference type="Rhea" id="RHEA-COMP:11727"/>
        <dbReference type="Rhea" id="RHEA-COMP:11728"/>
        <dbReference type="ChEBI" id="CHEBI:13193"/>
        <dbReference type="ChEBI" id="CHEBI:15378"/>
        <dbReference type="ChEBI" id="CHEBI:17499"/>
        <dbReference type="ChEBI" id="CHEBI:29950"/>
        <dbReference type="ChEBI" id="CHEBI:30616"/>
        <dbReference type="ChEBI" id="CHEBI:33019"/>
        <dbReference type="ChEBI" id="CHEBI:61963"/>
        <dbReference type="ChEBI" id="CHEBI:65315"/>
        <dbReference type="ChEBI" id="CHEBI:87170"/>
        <dbReference type="ChEBI" id="CHEBI:456215"/>
        <dbReference type="EC" id="2.8.1.13"/>
    </reaction>
</comment>
<comment type="subunit">
    <text evidence="1">Interacts with TusE.</text>
</comment>
<comment type="subcellular location">
    <subcellularLocation>
        <location evidence="1">Cytoplasm</location>
    </subcellularLocation>
</comment>
<comment type="similarity">
    <text evidence="1">Belongs to the MnmA/TRMU family.</text>
</comment>
<sequence length="371" mass="41366">MSDNSQKKVIVGMSGGVDSSVSAYLLQQQGYQVAGLFMKNWEEDDDEEYCSAATDLADAQAVCDKLGMELHTVNFAAEYWDNVFELFLAEYKAGRTPNPDILCNKEIKFKAFLEFAAEDLGADYIATGHYVRRQDVDGKSRLLRGLDGNKDQSYFLYTLSHEQIAQSLFPVGELEKPEVRRIAEQLDLVTAKKKDSTGICFIGERKFRDFLGRYLPAQPGPIMTVDGQLVGKHQGLMYHTLGQRKGLGIGGTKEGGDDPWYVVDKDLDSNTLLVAQGHEHPRLMSVGLVAQQLHWVDRQPVTAPFRCVVKTRYRQQDIPCTVTPLDDERVDVRFDDPVAAVTPGQSAVFYQGEICLGGGIIEQRYPLTNPA</sequence>